<reference key="1">
    <citation type="journal article" date="2008" name="PLoS Genet.">
        <title>The genome of Borrelia recurrentis, the agent of deadly louse-borne relapsing fever, is a degraded subset of tick-borne Borrelia duttonii.</title>
        <authorList>
            <person name="Lescot M."/>
            <person name="Audic S."/>
            <person name="Robert C."/>
            <person name="Nguyen T.T."/>
            <person name="Blanc G."/>
            <person name="Cutler S.J."/>
            <person name="Wincker P."/>
            <person name="Couloux A."/>
            <person name="Claverie J.-M."/>
            <person name="Raoult D."/>
            <person name="Drancourt M."/>
        </authorList>
    </citation>
    <scope>NUCLEOTIDE SEQUENCE [LARGE SCALE GENOMIC DNA]</scope>
    <source>
        <strain>Ly</strain>
    </source>
</reference>
<protein>
    <recommendedName>
        <fullName evidence="1">Ribosome-recycling factor</fullName>
        <shortName evidence="1">RRF</shortName>
    </recommendedName>
    <alternativeName>
        <fullName evidence="1">Ribosome-releasing factor</fullName>
    </alternativeName>
</protein>
<evidence type="ECO:0000255" key="1">
    <source>
        <dbReference type="HAMAP-Rule" id="MF_00040"/>
    </source>
</evidence>
<gene>
    <name evidence="1" type="primary">frr</name>
    <name type="ordered locus">BDU_124</name>
</gene>
<sequence length="184" mass="21316">MEEYKALLDEKMGRVVLSLESEYKSLRTGRVNSALFDKVFVDYYGEKTPLTRVANISVPEARLIVIQPWDRSLLSKIEQAILNSDLSMNPSSDGSVLRIKVPVLTIERRKEIVKQAKKIAEDHKIATRNIRHELNNKAKKQEKDSQITEDDLRRILDDIQRDTNFYIKKIDGIFDLKAKEIMEV</sequence>
<dbReference type="EMBL" id="CP000976">
    <property type="protein sequence ID" value="ACH93080.1"/>
    <property type="molecule type" value="Genomic_DNA"/>
</dbReference>
<dbReference type="RefSeq" id="WP_012537892.1">
    <property type="nucleotide sequence ID" value="NC_011229.1"/>
</dbReference>
<dbReference type="SMR" id="B5RLJ5"/>
<dbReference type="STRING" id="412419.BDU_124"/>
<dbReference type="KEGG" id="bdu:BDU_124"/>
<dbReference type="eggNOG" id="COG0233">
    <property type="taxonomic scope" value="Bacteria"/>
</dbReference>
<dbReference type="HOGENOM" id="CLU_073981_2_0_12"/>
<dbReference type="OrthoDB" id="9804006at2"/>
<dbReference type="Proteomes" id="UP000000611">
    <property type="component" value="Chromosome"/>
</dbReference>
<dbReference type="GO" id="GO:0005737">
    <property type="term" value="C:cytoplasm"/>
    <property type="evidence" value="ECO:0007669"/>
    <property type="project" value="UniProtKB-SubCell"/>
</dbReference>
<dbReference type="GO" id="GO:0043023">
    <property type="term" value="F:ribosomal large subunit binding"/>
    <property type="evidence" value="ECO:0007669"/>
    <property type="project" value="TreeGrafter"/>
</dbReference>
<dbReference type="GO" id="GO:0006415">
    <property type="term" value="P:translational termination"/>
    <property type="evidence" value="ECO:0007669"/>
    <property type="project" value="UniProtKB-UniRule"/>
</dbReference>
<dbReference type="CDD" id="cd00520">
    <property type="entry name" value="RRF"/>
    <property type="match status" value="1"/>
</dbReference>
<dbReference type="FunFam" id="1.10.132.20:FF:000001">
    <property type="entry name" value="Ribosome-recycling factor"/>
    <property type="match status" value="1"/>
</dbReference>
<dbReference type="FunFam" id="3.30.1360.40:FF:000001">
    <property type="entry name" value="Ribosome-recycling factor"/>
    <property type="match status" value="1"/>
</dbReference>
<dbReference type="Gene3D" id="3.30.1360.40">
    <property type="match status" value="1"/>
</dbReference>
<dbReference type="Gene3D" id="1.10.132.20">
    <property type="entry name" value="Ribosome-recycling factor"/>
    <property type="match status" value="1"/>
</dbReference>
<dbReference type="HAMAP" id="MF_00040">
    <property type="entry name" value="RRF"/>
    <property type="match status" value="1"/>
</dbReference>
<dbReference type="InterPro" id="IPR002661">
    <property type="entry name" value="Ribosome_recyc_fac"/>
</dbReference>
<dbReference type="InterPro" id="IPR023584">
    <property type="entry name" value="Ribosome_recyc_fac_dom"/>
</dbReference>
<dbReference type="InterPro" id="IPR036191">
    <property type="entry name" value="RRF_sf"/>
</dbReference>
<dbReference type="NCBIfam" id="TIGR00496">
    <property type="entry name" value="frr"/>
    <property type="match status" value="1"/>
</dbReference>
<dbReference type="PANTHER" id="PTHR20982:SF3">
    <property type="entry name" value="MITOCHONDRIAL RIBOSOME RECYCLING FACTOR PSEUDO 1"/>
    <property type="match status" value="1"/>
</dbReference>
<dbReference type="PANTHER" id="PTHR20982">
    <property type="entry name" value="RIBOSOME RECYCLING FACTOR"/>
    <property type="match status" value="1"/>
</dbReference>
<dbReference type="Pfam" id="PF01765">
    <property type="entry name" value="RRF"/>
    <property type="match status" value="1"/>
</dbReference>
<dbReference type="SUPFAM" id="SSF55194">
    <property type="entry name" value="Ribosome recycling factor, RRF"/>
    <property type="match status" value="1"/>
</dbReference>
<accession>B5RLJ5</accession>
<feature type="chain" id="PRO_1000090710" description="Ribosome-recycling factor">
    <location>
        <begin position="1"/>
        <end position="184"/>
    </location>
</feature>
<name>RRF_BORDL</name>
<keyword id="KW-0963">Cytoplasm</keyword>
<keyword id="KW-0648">Protein biosynthesis</keyword>
<comment type="function">
    <text evidence="1">Responsible for the release of ribosomes from messenger RNA at the termination of protein biosynthesis. May increase the efficiency of translation by recycling ribosomes from one round of translation to another.</text>
</comment>
<comment type="subcellular location">
    <subcellularLocation>
        <location evidence="1">Cytoplasm</location>
    </subcellularLocation>
</comment>
<comment type="similarity">
    <text evidence="1">Belongs to the RRF family.</text>
</comment>
<organism>
    <name type="scientific">Borrelia duttonii (strain Ly)</name>
    <dbReference type="NCBI Taxonomy" id="412419"/>
    <lineage>
        <taxon>Bacteria</taxon>
        <taxon>Pseudomonadati</taxon>
        <taxon>Spirochaetota</taxon>
        <taxon>Spirochaetia</taxon>
        <taxon>Spirochaetales</taxon>
        <taxon>Borreliaceae</taxon>
        <taxon>Borrelia</taxon>
    </lineage>
</organism>
<proteinExistence type="inferred from homology"/>